<protein>
    <recommendedName>
        <fullName evidence="1">Chaperonin GroEL 2</fullName>
        <ecNumber evidence="1">5.6.1.7</ecNumber>
    </recommendedName>
    <alternativeName>
        <fullName evidence="1">60 kDa chaperonin 2</fullName>
    </alternativeName>
    <alternativeName>
        <fullName evidence="1">Chaperonin-60 2</fullName>
        <shortName evidence="1">Cpn60 2</shortName>
    </alternativeName>
</protein>
<evidence type="ECO:0000255" key="1">
    <source>
        <dbReference type="HAMAP-Rule" id="MF_00600"/>
    </source>
</evidence>
<dbReference type="EC" id="5.6.1.7" evidence="1"/>
<dbReference type="EMBL" id="CP000615">
    <property type="protein sequence ID" value="ABO58134.1"/>
    <property type="molecule type" value="Genomic_DNA"/>
</dbReference>
<dbReference type="SMR" id="A4JPD1"/>
<dbReference type="KEGG" id="bvi:Bcep1808_5184"/>
<dbReference type="eggNOG" id="COG0459">
    <property type="taxonomic scope" value="Bacteria"/>
</dbReference>
<dbReference type="HOGENOM" id="CLU_016503_3_0_4"/>
<dbReference type="Proteomes" id="UP000002287">
    <property type="component" value="Chromosome 2"/>
</dbReference>
<dbReference type="GO" id="GO:0005737">
    <property type="term" value="C:cytoplasm"/>
    <property type="evidence" value="ECO:0007669"/>
    <property type="project" value="UniProtKB-SubCell"/>
</dbReference>
<dbReference type="GO" id="GO:0005524">
    <property type="term" value="F:ATP binding"/>
    <property type="evidence" value="ECO:0007669"/>
    <property type="project" value="UniProtKB-UniRule"/>
</dbReference>
<dbReference type="GO" id="GO:0140662">
    <property type="term" value="F:ATP-dependent protein folding chaperone"/>
    <property type="evidence" value="ECO:0007669"/>
    <property type="project" value="InterPro"/>
</dbReference>
<dbReference type="GO" id="GO:0016853">
    <property type="term" value="F:isomerase activity"/>
    <property type="evidence" value="ECO:0007669"/>
    <property type="project" value="UniProtKB-KW"/>
</dbReference>
<dbReference type="GO" id="GO:0051082">
    <property type="term" value="F:unfolded protein binding"/>
    <property type="evidence" value="ECO:0007669"/>
    <property type="project" value="UniProtKB-UniRule"/>
</dbReference>
<dbReference type="GO" id="GO:0042026">
    <property type="term" value="P:protein refolding"/>
    <property type="evidence" value="ECO:0007669"/>
    <property type="project" value="UniProtKB-UniRule"/>
</dbReference>
<dbReference type="CDD" id="cd03344">
    <property type="entry name" value="GroEL"/>
    <property type="match status" value="1"/>
</dbReference>
<dbReference type="FunFam" id="1.10.560.10:FF:000001">
    <property type="entry name" value="60 kDa chaperonin"/>
    <property type="match status" value="1"/>
</dbReference>
<dbReference type="FunFam" id="3.50.7.10:FF:000001">
    <property type="entry name" value="60 kDa chaperonin"/>
    <property type="match status" value="1"/>
</dbReference>
<dbReference type="Gene3D" id="3.50.7.10">
    <property type="entry name" value="GroEL"/>
    <property type="match status" value="1"/>
</dbReference>
<dbReference type="Gene3D" id="1.10.560.10">
    <property type="entry name" value="GroEL-like equatorial domain"/>
    <property type="match status" value="1"/>
</dbReference>
<dbReference type="Gene3D" id="3.30.260.10">
    <property type="entry name" value="TCP-1-like chaperonin intermediate domain"/>
    <property type="match status" value="1"/>
</dbReference>
<dbReference type="HAMAP" id="MF_00600">
    <property type="entry name" value="CH60"/>
    <property type="match status" value="1"/>
</dbReference>
<dbReference type="InterPro" id="IPR018370">
    <property type="entry name" value="Chaperonin_Cpn60_CS"/>
</dbReference>
<dbReference type="InterPro" id="IPR001844">
    <property type="entry name" value="Cpn60/GroEL"/>
</dbReference>
<dbReference type="InterPro" id="IPR002423">
    <property type="entry name" value="Cpn60/GroEL/TCP-1"/>
</dbReference>
<dbReference type="InterPro" id="IPR027409">
    <property type="entry name" value="GroEL-like_apical_dom_sf"/>
</dbReference>
<dbReference type="InterPro" id="IPR027413">
    <property type="entry name" value="GROEL-like_equatorial_sf"/>
</dbReference>
<dbReference type="InterPro" id="IPR027410">
    <property type="entry name" value="TCP-1-like_intermed_sf"/>
</dbReference>
<dbReference type="NCBIfam" id="TIGR02348">
    <property type="entry name" value="GroEL"/>
    <property type="match status" value="1"/>
</dbReference>
<dbReference type="NCBIfam" id="NF000592">
    <property type="entry name" value="PRK00013.1"/>
    <property type="match status" value="1"/>
</dbReference>
<dbReference type="NCBIfam" id="NF009487">
    <property type="entry name" value="PRK12849.1"/>
    <property type="match status" value="1"/>
</dbReference>
<dbReference type="NCBIfam" id="NF009488">
    <property type="entry name" value="PRK12850.1"/>
    <property type="match status" value="1"/>
</dbReference>
<dbReference type="NCBIfam" id="NF009489">
    <property type="entry name" value="PRK12851.1"/>
    <property type="match status" value="1"/>
</dbReference>
<dbReference type="PANTHER" id="PTHR45633">
    <property type="entry name" value="60 KDA HEAT SHOCK PROTEIN, MITOCHONDRIAL"/>
    <property type="match status" value="1"/>
</dbReference>
<dbReference type="Pfam" id="PF00118">
    <property type="entry name" value="Cpn60_TCP1"/>
    <property type="match status" value="1"/>
</dbReference>
<dbReference type="PRINTS" id="PR00298">
    <property type="entry name" value="CHAPERONIN60"/>
</dbReference>
<dbReference type="SUPFAM" id="SSF52029">
    <property type="entry name" value="GroEL apical domain-like"/>
    <property type="match status" value="1"/>
</dbReference>
<dbReference type="SUPFAM" id="SSF48592">
    <property type="entry name" value="GroEL equatorial domain-like"/>
    <property type="match status" value="1"/>
</dbReference>
<dbReference type="SUPFAM" id="SSF54849">
    <property type="entry name" value="GroEL-intermediate domain like"/>
    <property type="match status" value="1"/>
</dbReference>
<dbReference type="PROSITE" id="PS00296">
    <property type="entry name" value="CHAPERONINS_CPN60"/>
    <property type="match status" value="1"/>
</dbReference>
<comment type="function">
    <text evidence="1">Together with its co-chaperonin GroES, plays an essential role in assisting protein folding. The GroEL-GroES system forms a nano-cage that allows encapsulation of the non-native substrate proteins and provides a physical environment optimized to promote and accelerate protein folding.</text>
</comment>
<comment type="catalytic activity">
    <reaction evidence="1">
        <text>ATP + H2O + a folded polypeptide = ADP + phosphate + an unfolded polypeptide.</text>
        <dbReference type="EC" id="5.6.1.7"/>
    </reaction>
</comment>
<comment type="subunit">
    <text evidence="1">Forms a cylinder of 14 subunits composed of two heptameric rings stacked back-to-back. Interacts with the co-chaperonin GroES.</text>
</comment>
<comment type="subcellular location">
    <subcellularLocation>
        <location evidence="1">Cytoplasm</location>
    </subcellularLocation>
</comment>
<comment type="similarity">
    <text evidence="1">Belongs to the chaperonin (HSP60) family.</text>
</comment>
<accession>A4JPD1</accession>
<organism>
    <name type="scientific">Burkholderia vietnamiensis (strain G4 / LMG 22486)</name>
    <name type="common">Burkholderia cepacia (strain R1808)</name>
    <dbReference type="NCBI Taxonomy" id="269482"/>
    <lineage>
        <taxon>Bacteria</taxon>
        <taxon>Pseudomonadati</taxon>
        <taxon>Pseudomonadota</taxon>
        <taxon>Betaproteobacteria</taxon>
        <taxon>Burkholderiales</taxon>
        <taxon>Burkholderiaceae</taxon>
        <taxon>Burkholderia</taxon>
        <taxon>Burkholderia cepacia complex</taxon>
    </lineage>
</organism>
<sequence length="540" mass="56810">MTAKDVKFRDGARSQIVKGVNVLADAVKVTLGPKGRNVVIERSFGAPVITKDGVSVAKEIELKDRFENMGAQIVKQVASKTADVAGDGTTTATVLAQAIVQEGMKHVAAGMNPMDLKRGIDKAVGVVLEELRTLSRPISTHKEIAQVGAISANADDAIGKIIADAMEKVGKEGVITVEDGKSLDNELDVVEGMQFDRGYISPYFINDPEKQAAYLDDALILLHDKKISNIRDLLPILEAASKAGKPLLIVAEDVEAEALATLVVNAMRGILKVAAVKAPGFGDRRKAMLEDIAILTGATVISEETGKQLDKATLDDLGSAKRVEVRKDDTIIIDGAGDAARIDARVKSIRVQIDEATSDYDREKLQERVAKLAGGVAVIKVGAVTEVEMKEKKDRVDDALHATRAAVEEGIVPGGGVALLRARAALTDLKGANGDQDAGIRIVLRALEAPLRVIASNAGDEPSVVIAKVLEGSGNFGYNAATGEYGDLVEAGVVDPTKVTRTALQNAASIAGLVLTTDATVADAPKDERAEAAPSPELGY</sequence>
<name>CH602_BURVG</name>
<feature type="chain" id="PRO_0000331992" description="Chaperonin GroEL 2">
    <location>
        <begin position="1"/>
        <end position="540"/>
    </location>
</feature>
<feature type="binding site" evidence="1">
    <location>
        <begin position="30"/>
        <end position="33"/>
    </location>
    <ligand>
        <name>ATP</name>
        <dbReference type="ChEBI" id="CHEBI:30616"/>
    </ligand>
</feature>
<feature type="binding site" evidence="1">
    <location>
        <position position="51"/>
    </location>
    <ligand>
        <name>ATP</name>
        <dbReference type="ChEBI" id="CHEBI:30616"/>
    </ligand>
</feature>
<feature type="binding site" evidence="1">
    <location>
        <begin position="87"/>
        <end position="91"/>
    </location>
    <ligand>
        <name>ATP</name>
        <dbReference type="ChEBI" id="CHEBI:30616"/>
    </ligand>
</feature>
<feature type="binding site" evidence="1">
    <location>
        <position position="415"/>
    </location>
    <ligand>
        <name>ATP</name>
        <dbReference type="ChEBI" id="CHEBI:30616"/>
    </ligand>
</feature>
<feature type="binding site" evidence="1">
    <location>
        <begin position="479"/>
        <end position="481"/>
    </location>
    <ligand>
        <name>ATP</name>
        <dbReference type="ChEBI" id="CHEBI:30616"/>
    </ligand>
</feature>
<feature type="binding site" evidence="1">
    <location>
        <position position="495"/>
    </location>
    <ligand>
        <name>ATP</name>
        <dbReference type="ChEBI" id="CHEBI:30616"/>
    </ligand>
</feature>
<gene>
    <name evidence="1" type="primary">groEL2</name>
    <name evidence="1" type="synonym">groL2</name>
    <name type="ordered locus">Bcep1808_5184</name>
</gene>
<keyword id="KW-0067">ATP-binding</keyword>
<keyword id="KW-0143">Chaperone</keyword>
<keyword id="KW-0963">Cytoplasm</keyword>
<keyword id="KW-0413">Isomerase</keyword>
<keyword id="KW-0547">Nucleotide-binding</keyword>
<proteinExistence type="inferred from homology"/>
<reference key="1">
    <citation type="submission" date="2007-03" db="EMBL/GenBank/DDBJ databases">
        <title>Complete sequence of chromosome 2 of Burkholderia vietnamiensis G4.</title>
        <authorList>
            <consortium name="US DOE Joint Genome Institute"/>
            <person name="Copeland A."/>
            <person name="Lucas S."/>
            <person name="Lapidus A."/>
            <person name="Barry K."/>
            <person name="Detter J.C."/>
            <person name="Glavina del Rio T."/>
            <person name="Hammon N."/>
            <person name="Israni S."/>
            <person name="Dalin E."/>
            <person name="Tice H."/>
            <person name="Pitluck S."/>
            <person name="Chain P."/>
            <person name="Malfatti S."/>
            <person name="Shin M."/>
            <person name="Vergez L."/>
            <person name="Schmutz J."/>
            <person name="Larimer F."/>
            <person name="Land M."/>
            <person name="Hauser L."/>
            <person name="Kyrpides N."/>
            <person name="Tiedje J."/>
            <person name="Richardson P."/>
        </authorList>
    </citation>
    <scope>NUCLEOTIDE SEQUENCE [LARGE SCALE GENOMIC DNA]</scope>
    <source>
        <strain>G4 / LMG 22486</strain>
    </source>
</reference>